<feature type="chain" id="PRO_0000088275" description="3-phosphoshikimate 1-carboxyvinyltransferase">
    <location>
        <begin position="1"/>
        <end position="433"/>
    </location>
</feature>
<feature type="active site" description="Proton acceptor" evidence="1">
    <location>
        <position position="317"/>
    </location>
</feature>
<feature type="binding site" evidence="1">
    <location>
        <position position="23"/>
    </location>
    <ligand>
        <name>3-phosphoshikimate</name>
        <dbReference type="ChEBI" id="CHEBI:145989"/>
    </ligand>
</feature>
<feature type="binding site" evidence="1">
    <location>
        <position position="23"/>
    </location>
    <ligand>
        <name>phosphoenolpyruvate</name>
        <dbReference type="ChEBI" id="CHEBI:58702"/>
    </ligand>
</feature>
<feature type="binding site" evidence="1">
    <location>
        <position position="24"/>
    </location>
    <ligand>
        <name>3-phosphoshikimate</name>
        <dbReference type="ChEBI" id="CHEBI:145989"/>
    </ligand>
</feature>
<feature type="binding site" evidence="1">
    <location>
        <position position="28"/>
    </location>
    <ligand>
        <name>3-phosphoshikimate</name>
        <dbReference type="ChEBI" id="CHEBI:145989"/>
    </ligand>
</feature>
<feature type="binding site" evidence="1">
    <location>
        <position position="95"/>
    </location>
    <ligand>
        <name>phosphoenolpyruvate</name>
        <dbReference type="ChEBI" id="CHEBI:58702"/>
    </ligand>
</feature>
<feature type="binding site" evidence="1">
    <location>
        <position position="123"/>
    </location>
    <ligand>
        <name>phosphoenolpyruvate</name>
        <dbReference type="ChEBI" id="CHEBI:58702"/>
    </ligand>
</feature>
<feature type="binding site" evidence="1">
    <location>
        <position position="170"/>
    </location>
    <ligand>
        <name>3-phosphoshikimate</name>
        <dbReference type="ChEBI" id="CHEBI:145989"/>
    </ligand>
</feature>
<feature type="binding site" evidence="1">
    <location>
        <position position="171"/>
    </location>
    <ligand>
        <name>3-phosphoshikimate</name>
        <dbReference type="ChEBI" id="CHEBI:145989"/>
    </ligand>
</feature>
<feature type="binding site" evidence="1">
    <location>
        <position position="172"/>
    </location>
    <ligand>
        <name>3-phosphoshikimate</name>
        <dbReference type="ChEBI" id="CHEBI:145989"/>
    </ligand>
</feature>
<feature type="binding site" evidence="1">
    <location>
        <position position="172"/>
    </location>
    <ligand>
        <name>phosphoenolpyruvate</name>
        <dbReference type="ChEBI" id="CHEBI:58702"/>
    </ligand>
</feature>
<feature type="binding site" evidence="1">
    <location>
        <position position="198"/>
    </location>
    <ligand>
        <name>3-phosphoshikimate</name>
        <dbReference type="ChEBI" id="CHEBI:145989"/>
    </ligand>
</feature>
<feature type="binding site" evidence="1">
    <location>
        <position position="317"/>
    </location>
    <ligand>
        <name>3-phosphoshikimate</name>
        <dbReference type="ChEBI" id="CHEBI:145989"/>
    </ligand>
</feature>
<feature type="binding site" evidence="1">
    <location>
        <position position="344"/>
    </location>
    <ligand>
        <name>3-phosphoshikimate</name>
        <dbReference type="ChEBI" id="CHEBI:145989"/>
    </ligand>
</feature>
<feature type="binding site" evidence="1">
    <location>
        <position position="348"/>
    </location>
    <ligand>
        <name>phosphoenolpyruvate</name>
        <dbReference type="ChEBI" id="CHEBI:58702"/>
    </ligand>
</feature>
<feature type="binding site" evidence="1">
    <location>
        <position position="391"/>
    </location>
    <ligand>
        <name>phosphoenolpyruvate</name>
        <dbReference type="ChEBI" id="CHEBI:58702"/>
    </ligand>
</feature>
<feature type="binding site" evidence="1">
    <location>
        <position position="416"/>
    </location>
    <ligand>
        <name>phosphoenolpyruvate</name>
        <dbReference type="ChEBI" id="CHEBI:58702"/>
    </ligand>
</feature>
<dbReference type="EC" id="2.5.1.19" evidence="1"/>
<dbReference type="EMBL" id="AE002098">
    <property type="protein sequence ID" value="AAF41793.1"/>
    <property type="molecule type" value="Genomic_DNA"/>
</dbReference>
<dbReference type="PIR" id="A81085">
    <property type="entry name" value="A81085"/>
</dbReference>
<dbReference type="RefSeq" id="NP_274444.1">
    <property type="nucleotide sequence ID" value="NC_003112.2"/>
</dbReference>
<dbReference type="RefSeq" id="WP_002225114.1">
    <property type="nucleotide sequence ID" value="NC_003112.2"/>
</dbReference>
<dbReference type="SMR" id="Q9JYU1"/>
<dbReference type="FunCoup" id="Q9JYU1">
    <property type="interactions" value="469"/>
</dbReference>
<dbReference type="STRING" id="122586.NMB1432"/>
<dbReference type="PaxDb" id="122586-NMB1432"/>
<dbReference type="KEGG" id="nme:NMB1432"/>
<dbReference type="PATRIC" id="fig|122586.8.peg.1800"/>
<dbReference type="HOGENOM" id="CLU_024321_0_0_4"/>
<dbReference type="InParanoid" id="Q9JYU1"/>
<dbReference type="OrthoDB" id="9809920at2"/>
<dbReference type="UniPathway" id="UPA00053">
    <property type="reaction ID" value="UER00089"/>
</dbReference>
<dbReference type="Proteomes" id="UP000000425">
    <property type="component" value="Chromosome"/>
</dbReference>
<dbReference type="GO" id="GO:0005737">
    <property type="term" value="C:cytoplasm"/>
    <property type="evidence" value="ECO:0007669"/>
    <property type="project" value="UniProtKB-SubCell"/>
</dbReference>
<dbReference type="GO" id="GO:0003866">
    <property type="term" value="F:3-phosphoshikimate 1-carboxyvinyltransferase activity"/>
    <property type="evidence" value="ECO:0000318"/>
    <property type="project" value="GO_Central"/>
</dbReference>
<dbReference type="GO" id="GO:0008652">
    <property type="term" value="P:amino acid biosynthetic process"/>
    <property type="evidence" value="ECO:0007669"/>
    <property type="project" value="UniProtKB-KW"/>
</dbReference>
<dbReference type="GO" id="GO:0009073">
    <property type="term" value="P:aromatic amino acid family biosynthetic process"/>
    <property type="evidence" value="ECO:0007669"/>
    <property type="project" value="UniProtKB-KW"/>
</dbReference>
<dbReference type="GO" id="GO:0009423">
    <property type="term" value="P:chorismate biosynthetic process"/>
    <property type="evidence" value="ECO:0000318"/>
    <property type="project" value="GO_Central"/>
</dbReference>
<dbReference type="CDD" id="cd01556">
    <property type="entry name" value="EPSP_synthase"/>
    <property type="match status" value="1"/>
</dbReference>
<dbReference type="FunFam" id="3.65.10.10:FF:000003">
    <property type="entry name" value="3-phosphoshikimate 1-carboxyvinyltransferase"/>
    <property type="match status" value="1"/>
</dbReference>
<dbReference type="FunFam" id="3.65.10.10:FF:000005">
    <property type="entry name" value="3-phosphoshikimate 1-carboxyvinyltransferase"/>
    <property type="match status" value="1"/>
</dbReference>
<dbReference type="Gene3D" id="3.65.10.10">
    <property type="entry name" value="Enolpyruvate transferase domain"/>
    <property type="match status" value="2"/>
</dbReference>
<dbReference type="HAMAP" id="MF_00210">
    <property type="entry name" value="EPSP_synth"/>
    <property type="match status" value="1"/>
</dbReference>
<dbReference type="InterPro" id="IPR001986">
    <property type="entry name" value="Enolpyruvate_Tfrase_dom"/>
</dbReference>
<dbReference type="InterPro" id="IPR036968">
    <property type="entry name" value="Enolpyruvate_Tfrase_sf"/>
</dbReference>
<dbReference type="InterPro" id="IPR006264">
    <property type="entry name" value="EPSP_synthase"/>
</dbReference>
<dbReference type="InterPro" id="IPR023193">
    <property type="entry name" value="EPSP_synthase_CS"/>
</dbReference>
<dbReference type="InterPro" id="IPR013792">
    <property type="entry name" value="RNA3'P_cycl/enolpyr_Trfase_a/b"/>
</dbReference>
<dbReference type="NCBIfam" id="TIGR01356">
    <property type="entry name" value="aroA"/>
    <property type="match status" value="1"/>
</dbReference>
<dbReference type="PANTHER" id="PTHR21090">
    <property type="entry name" value="AROM/DEHYDROQUINATE SYNTHASE"/>
    <property type="match status" value="1"/>
</dbReference>
<dbReference type="PANTHER" id="PTHR21090:SF5">
    <property type="entry name" value="PENTAFUNCTIONAL AROM POLYPEPTIDE"/>
    <property type="match status" value="1"/>
</dbReference>
<dbReference type="Pfam" id="PF00275">
    <property type="entry name" value="EPSP_synthase"/>
    <property type="match status" value="1"/>
</dbReference>
<dbReference type="PIRSF" id="PIRSF000505">
    <property type="entry name" value="EPSPS"/>
    <property type="match status" value="1"/>
</dbReference>
<dbReference type="SUPFAM" id="SSF55205">
    <property type="entry name" value="EPT/RTPC-like"/>
    <property type="match status" value="1"/>
</dbReference>
<dbReference type="PROSITE" id="PS00104">
    <property type="entry name" value="EPSP_SYNTHASE_1"/>
    <property type="match status" value="1"/>
</dbReference>
<dbReference type="PROSITE" id="PS00885">
    <property type="entry name" value="EPSP_SYNTHASE_2"/>
    <property type="match status" value="1"/>
</dbReference>
<proteinExistence type="inferred from homology"/>
<name>AROA_NEIMB</name>
<gene>
    <name evidence="1" type="primary">aroA</name>
    <name type="ordered locus">NMB1432</name>
</gene>
<accession>Q9JYU1</accession>
<comment type="function">
    <text evidence="1">Catalyzes the transfer of the enolpyruvyl moiety of phosphoenolpyruvate (PEP) to the 5-hydroxyl of shikimate-3-phosphate (S3P) to produce enolpyruvyl shikimate-3-phosphate and inorganic phosphate.</text>
</comment>
<comment type="catalytic activity">
    <reaction evidence="1">
        <text>3-phosphoshikimate + phosphoenolpyruvate = 5-O-(1-carboxyvinyl)-3-phosphoshikimate + phosphate</text>
        <dbReference type="Rhea" id="RHEA:21256"/>
        <dbReference type="ChEBI" id="CHEBI:43474"/>
        <dbReference type="ChEBI" id="CHEBI:57701"/>
        <dbReference type="ChEBI" id="CHEBI:58702"/>
        <dbReference type="ChEBI" id="CHEBI:145989"/>
        <dbReference type="EC" id="2.5.1.19"/>
    </reaction>
    <physiologicalReaction direction="left-to-right" evidence="1">
        <dbReference type="Rhea" id="RHEA:21257"/>
    </physiologicalReaction>
</comment>
<comment type="pathway">
    <text evidence="1">Metabolic intermediate biosynthesis; chorismate biosynthesis; chorismate from D-erythrose 4-phosphate and phosphoenolpyruvate: step 6/7.</text>
</comment>
<comment type="subunit">
    <text evidence="1">Monomer.</text>
</comment>
<comment type="subcellular location">
    <subcellularLocation>
        <location evidence="1">Cytoplasm</location>
    </subcellularLocation>
</comment>
<comment type="similarity">
    <text evidence="1">Belongs to the EPSP synthase family.</text>
</comment>
<evidence type="ECO:0000255" key="1">
    <source>
        <dbReference type="HAMAP-Rule" id="MF_00210"/>
    </source>
</evidence>
<reference key="1">
    <citation type="journal article" date="2000" name="Science">
        <title>Complete genome sequence of Neisseria meningitidis serogroup B strain MC58.</title>
        <authorList>
            <person name="Tettelin H."/>
            <person name="Saunders N.J."/>
            <person name="Heidelberg J.F."/>
            <person name="Jeffries A.C."/>
            <person name="Nelson K.E."/>
            <person name="Eisen J.A."/>
            <person name="Ketchum K.A."/>
            <person name="Hood D.W."/>
            <person name="Peden J.F."/>
            <person name="Dodson R.J."/>
            <person name="Nelson W.C."/>
            <person name="Gwinn M.L."/>
            <person name="DeBoy R.T."/>
            <person name="Peterson J.D."/>
            <person name="Hickey E.K."/>
            <person name="Haft D.H."/>
            <person name="Salzberg S.L."/>
            <person name="White O."/>
            <person name="Fleischmann R.D."/>
            <person name="Dougherty B.A."/>
            <person name="Mason T.M."/>
            <person name="Ciecko A."/>
            <person name="Parksey D.S."/>
            <person name="Blair E."/>
            <person name="Cittone H."/>
            <person name="Clark E.B."/>
            <person name="Cotton M.D."/>
            <person name="Utterback T.R."/>
            <person name="Khouri H.M."/>
            <person name="Qin H."/>
            <person name="Vamathevan J.J."/>
            <person name="Gill J."/>
            <person name="Scarlato V."/>
            <person name="Masignani V."/>
            <person name="Pizza M."/>
            <person name="Grandi G."/>
            <person name="Sun L."/>
            <person name="Smith H.O."/>
            <person name="Fraser C.M."/>
            <person name="Moxon E.R."/>
            <person name="Rappuoli R."/>
            <person name="Venter J.C."/>
        </authorList>
    </citation>
    <scope>NUCLEOTIDE SEQUENCE [LARGE SCALE GENOMIC DNA]</scope>
    <source>
        <strain>ATCC BAA-335 / MC58</strain>
    </source>
</reference>
<protein>
    <recommendedName>
        <fullName evidence="1">3-phosphoshikimate 1-carboxyvinyltransferase</fullName>
        <ecNumber evidence="1">2.5.1.19</ecNumber>
    </recommendedName>
    <alternativeName>
        <fullName evidence="1">5-enolpyruvylshikimate-3-phosphate synthase</fullName>
        <shortName evidence="1">EPSP synthase</shortName>
        <shortName evidence="1">EPSPS</shortName>
    </alternativeName>
</protein>
<keyword id="KW-0028">Amino-acid biosynthesis</keyword>
<keyword id="KW-0057">Aromatic amino acid biosynthesis</keyword>
<keyword id="KW-0963">Cytoplasm</keyword>
<keyword id="KW-1185">Reference proteome</keyword>
<keyword id="KW-0808">Transferase</keyword>
<sequence length="433" mass="47060">MTESVRLPVARLKPSTVALPGSKSISNRTLLLAALSDNACEIHSLLKSDDTDRMLEALDKLGVQIEYLAEDRLKVHGTGGRFPNRTADLFLGNAGTAFRPLTAALAVLGGDYHLHGVPRMHERPIGDLVDALRIAGADVEYLGKEHYPPLHIGERQDNGERVIPIKGNVSSQFLTALLMALPLTGQAFEIRMVGELISKPYIDITLKLMAQFGVQVINEGYRVFKIPADAHYHAPEHLHVEGDASSASYFLAAGLIAATPVRVTGIGANSIQGDVAFARELEKIGADVVWGENFVEVSRPKERAVQSFDLDANHIPDAAMTLAIVALATGQTCTLRNIGSWRVKETDRIAAMANELRKLGAKVVEEAEAIHITPPETLTPDAVIDTYDDHRMAMCFSLVSLLGVPVVINDPKCTHKTFPTYFDVFSSLTETAE</sequence>
<organism>
    <name type="scientific">Neisseria meningitidis serogroup B (strain ATCC BAA-335 / MC58)</name>
    <dbReference type="NCBI Taxonomy" id="122586"/>
    <lineage>
        <taxon>Bacteria</taxon>
        <taxon>Pseudomonadati</taxon>
        <taxon>Pseudomonadota</taxon>
        <taxon>Betaproteobacteria</taxon>
        <taxon>Neisseriales</taxon>
        <taxon>Neisseriaceae</taxon>
        <taxon>Neisseria</taxon>
    </lineage>
</organism>